<accession>Q9RR90</accession>
<name>ISPD_DEIRA</name>
<organism>
    <name type="scientific">Deinococcus radiodurans (strain ATCC 13939 / DSM 20539 / JCM 16871 / CCUG 27074 / LMG 4051 / NBRC 15346 / NCIMB 9279 / VKM B-1422 / R1)</name>
    <dbReference type="NCBI Taxonomy" id="243230"/>
    <lineage>
        <taxon>Bacteria</taxon>
        <taxon>Thermotogati</taxon>
        <taxon>Deinococcota</taxon>
        <taxon>Deinococci</taxon>
        <taxon>Deinococcales</taxon>
        <taxon>Deinococcaceae</taxon>
        <taxon>Deinococcus</taxon>
    </lineage>
</organism>
<proteinExistence type="inferred from homology"/>
<protein>
    <recommendedName>
        <fullName evidence="1">2-C-methyl-D-erythritol 4-phosphate cytidylyltransferase</fullName>
        <ecNumber evidence="1">2.7.7.60</ecNumber>
    </recommendedName>
    <alternativeName>
        <fullName evidence="1">4-diphosphocytidyl-2C-methyl-D-erythritol synthase</fullName>
    </alternativeName>
    <alternativeName>
        <fullName evidence="1">MEP cytidylyltransferase</fullName>
        <shortName evidence="1">MCT</shortName>
    </alternativeName>
</protein>
<keyword id="KW-0414">Isoprene biosynthesis</keyword>
<keyword id="KW-0548">Nucleotidyltransferase</keyword>
<keyword id="KW-1185">Reference proteome</keyword>
<keyword id="KW-0808">Transferase</keyword>
<evidence type="ECO:0000255" key="1">
    <source>
        <dbReference type="HAMAP-Rule" id="MF_00108"/>
    </source>
</evidence>
<gene>
    <name evidence="1" type="primary">ispD</name>
    <name type="ordered locus">DR_2604</name>
</gene>
<reference key="1">
    <citation type="journal article" date="1999" name="Science">
        <title>Genome sequence of the radioresistant bacterium Deinococcus radiodurans R1.</title>
        <authorList>
            <person name="White O."/>
            <person name="Eisen J.A."/>
            <person name="Heidelberg J.F."/>
            <person name="Hickey E.K."/>
            <person name="Peterson J.D."/>
            <person name="Dodson R.J."/>
            <person name="Haft D.H."/>
            <person name="Gwinn M.L."/>
            <person name="Nelson W.C."/>
            <person name="Richardson D.L."/>
            <person name="Moffat K.S."/>
            <person name="Qin H."/>
            <person name="Jiang L."/>
            <person name="Pamphile W."/>
            <person name="Crosby M."/>
            <person name="Shen M."/>
            <person name="Vamathevan J.J."/>
            <person name="Lam P."/>
            <person name="McDonald L.A."/>
            <person name="Utterback T.R."/>
            <person name="Zalewski C."/>
            <person name="Makarova K.S."/>
            <person name="Aravind L."/>
            <person name="Daly M.J."/>
            <person name="Minton K.W."/>
            <person name="Fleischmann R.D."/>
            <person name="Ketchum K.A."/>
            <person name="Nelson K.E."/>
            <person name="Salzberg S.L."/>
            <person name="Smith H.O."/>
            <person name="Venter J.C."/>
            <person name="Fraser C.M."/>
        </authorList>
    </citation>
    <scope>NUCLEOTIDE SEQUENCE [LARGE SCALE GENOMIC DNA]</scope>
    <source>
        <strain>ATCC 13939 / DSM 20539 / JCM 16871 / CCUG 27074 / LMG 4051 / NBRC 15346 / NCIMB 9279 / VKM B-1422 / R1</strain>
    </source>
</reference>
<dbReference type="EC" id="2.7.7.60" evidence="1"/>
<dbReference type="EMBL" id="AE000513">
    <property type="protein sequence ID" value="AAF12141.1"/>
    <property type="molecule type" value="Genomic_DNA"/>
</dbReference>
<dbReference type="PIR" id="D75254">
    <property type="entry name" value="D75254"/>
</dbReference>
<dbReference type="RefSeq" id="NP_296323.1">
    <property type="nucleotide sequence ID" value="NC_001263.1"/>
</dbReference>
<dbReference type="RefSeq" id="WP_010889228.1">
    <property type="nucleotide sequence ID" value="NC_001263.1"/>
</dbReference>
<dbReference type="SMR" id="Q9RR90"/>
<dbReference type="FunCoup" id="Q9RR90">
    <property type="interactions" value="285"/>
</dbReference>
<dbReference type="STRING" id="243230.DR_2604"/>
<dbReference type="PaxDb" id="243230-DR_2604"/>
<dbReference type="EnsemblBacteria" id="AAF12141">
    <property type="protein sequence ID" value="AAF12141"/>
    <property type="gene ID" value="DR_2604"/>
</dbReference>
<dbReference type="GeneID" id="69518858"/>
<dbReference type="KEGG" id="dra:DR_2604"/>
<dbReference type="PATRIC" id="fig|243230.17.peg.2851"/>
<dbReference type="eggNOG" id="COG1211">
    <property type="taxonomic scope" value="Bacteria"/>
</dbReference>
<dbReference type="HOGENOM" id="CLU_061281_2_2_0"/>
<dbReference type="InParanoid" id="Q9RR90"/>
<dbReference type="OrthoDB" id="9806837at2"/>
<dbReference type="UniPathway" id="UPA00056">
    <property type="reaction ID" value="UER00093"/>
</dbReference>
<dbReference type="Proteomes" id="UP000002524">
    <property type="component" value="Chromosome 1"/>
</dbReference>
<dbReference type="GO" id="GO:0050518">
    <property type="term" value="F:2-C-methyl-D-erythritol 4-phosphate cytidylyltransferase activity"/>
    <property type="evidence" value="ECO:0000318"/>
    <property type="project" value="GO_Central"/>
</dbReference>
<dbReference type="GO" id="GO:0019288">
    <property type="term" value="P:isopentenyl diphosphate biosynthetic process, methylerythritol 4-phosphate pathway"/>
    <property type="evidence" value="ECO:0007669"/>
    <property type="project" value="UniProtKB-UniRule"/>
</dbReference>
<dbReference type="CDD" id="cd02516">
    <property type="entry name" value="CDP-ME_synthetase"/>
    <property type="match status" value="1"/>
</dbReference>
<dbReference type="FunFam" id="3.90.550.10:FF:000003">
    <property type="entry name" value="2-C-methyl-D-erythritol 4-phosphate cytidylyltransferase"/>
    <property type="match status" value="1"/>
</dbReference>
<dbReference type="Gene3D" id="3.90.550.10">
    <property type="entry name" value="Spore Coat Polysaccharide Biosynthesis Protein SpsA, Chain A"/>
    <property type="match status" value="1"/>
</dbReference>
<dbReference type="HAMAP" id="MF_00108">
    <property type="entry name" value="IspD"/>
    <property type="match status" value="1"/>
</dbReference>
<dbReference type="InterPro" id="IPR001228">
    <property type="entry name" value="IspD"/>
</dbReference>
<dbReference type="InterPro" id="IPR034683">
    <property type="entry name" value="IspD/TarI"/>
</dbReference>
<dbReference type="InterPro" id="IPR050088">
    <property type="entry name" value="IspD/TarI_cytidylyltransf_bact"/>
</dbReference>
<dbReference type="InterPro" id="IPR018294">
    <property type="entry name" value="ISPD_synthase_CS"/>
</dbReference>
<dbReference type="InterPro" id="IPR029044">
    <property type="entry name" value="Nucleotide-diphossugar_trans"/>
</dbReference>
<dbReference type="NCBIfam" id="TIGR00453">
    <property type="entry name" value="ispD"/>
    <property type="match status" value="1"/>
</dbReference>
<dbReference type="PANTHER" id="PTHR32125">
    <property type="entry name" value="2-C-METHYL-D-ERYTHRITOL 4-PHOSPHATE CYTIDYLYLTRANSFERASE, CHLOROPLASTIC"/>
    <property type="match status" value="1"/>
</dbReference>
<dbReference type="PANTHER" id="PTHR32125:SF4">
    <property type="entry name" value="2-C-METHYL-D-ERYTHRITOL 4-PHOSPHATE CYTIDYLYLTRANSFERASE, CHLOROPLASTIC"/>
    <property type="match status" value="1"/>
</dbReference>
<dbReference type="Pfam" id="PF01128">
    <property type="entry name" value="IspD"/>
    <property type="match status" value="1"/>
</dbReference>
<dbReference type="SUPFAM" id="SSF53448">
    <property type="entry name" value="Nucleotide-diphospho-sugar transferases"/>
    <property type="match status" value="1"/>
</dbReference>
<dbReference type="PROSITE" id="PS01295">
    <property type="entry name" value="ISPD"/>
    <property type="match status" value="1"/>
</dbReference>
<feature type="chain" id="PRO_0000075571" description="2-C-methyl-D-erythritol 4-phosphate cytidylyltransferase">
    <location>
        <begin position="1"/>
        <end position="232"/>
    </location>
</feature>
<feature type="site" description="Transition state stabilizer" evidence="1">
    <location>
        <position position="23"/>
    </location>
</feature>
<feature type="site" description="Transition state stabilizer" evidence="1">
    <location>
        <position position="29"/>
    </location>
</feature>
<feature type="site" description="Positions MEP for the nucleophilic attack" evidence="1">
    <location>
        <position position="147"/>
    </location>
</feature>
<feature type="site" description="Positions MEP for the nucleophilic attack" evidence="1">
    <location>
        <position position="203"/>
    </location>
</feature>
<comment type="function">
    <text evidence="1">Catalyzes the formation of 4-diphosphocytidyl-2-C-methyl-D-erythritol from CTP and 2-C-methyl-D-erythritol 4-phosphate (MEP).</text>
</comment>
<comment type="catalytic activity">
    <reaction evidence="1">
        <text>2-C-methyl-D-erythritol 4-phosphate + CTP + H(+) = 4-CDP-2-C-methyl-D-erythritol + diphosphate</text>
        <dbReference type="Rhea" id="RHEA:13429"/>
        <dbReference type="ChEBI" id="CHEBI:15378"/>
        <dbReference type="ChEBI" id="CHEBI:33019"/>
        <dbReference type="ChEBI" id="CHEBI:37563"/>
        <dbReference type="ChEBI" id="CHEBI:57823"/>
        <dbReference type="ChEBI" id="CHEBI:58262"/>
        <dbReference type="EC" id="2.7.7.60"/>
    </reaction>
</comment>
<comment type="pathway">
    <text evidence="1">Isoprenoid biosynthesis; isopentenyl diphosphate biosynthesis via DXP pathway; isopentenyl diphosphate from 1-deoxy-D-xylulose 5-phosphate: step 2/6.</text>
</comment>
<comment type="similarity">
    <text evidence="1">Belongs to the IspD/TarI cytidylyltransferase family. IspD subfamily.</text>
</comment>
<sequence length="232" mass="23895">MSAPHTSSPRTAALIPAAGSGTRLGLGPKAFVEVAGRSLLARSVAALAPFVDEVVVALPAGMDLPAGVPARAIVGGETRQGSVRRLLEATEAGTVLIHDAARPFVPPPVILALLDAIAATGAATVALPVADTLVRAEGQSWGQLVPREGLWAVQTPQGFRRELLLQAHARAEAEQYAATDDAGLLARLGVQVRLVPGDARLFKVTTPGDLALAEALTGHVDGGWLTVEGEKR</sequence>